<reference key="1">
    <citation type="journal article" date="2003" name="Genome Res.">
        <title>Comparative genome analysis of Vibrio vulnificus, a marine pathogen.</title>
        <authorList>
            <person name="Chen C.-Y."/>
            <person name="Wu K.-M."/>
            <person name="Chang Y.-C."/>
            <person name="Chang C.-H."/>
            <person name="Tsai H.-C."/>
            <person name="Liao T.-L."/>
            <person name="Liu Y.-M."/>
            <person name="Chen H.-J."/>
            <person name="Shen A.B.-T."/>
            <person name="Li J.-C."/>
            <person name="Su T.-L."/>
            <person name="Shao C.-P."/>
            <person name="Lee C.-T."/>
            <person name="Hor L.-I."/>
            <person name="Tsai S.-F."/>
        </authorList>
    </citation>
    <scope>NUCLEOTIDE SEQUENCE [LARGE SCALE GENOMIC DNA]</scope>
    <source>
        <strain>YJ016</strain>
    </source>
</reference>
<keyword id="KW-0413">Isomerase</keyword>
<keyword id="KW-0819">tRNA processing</keyword>
<accession>Q7MI11</accession>
<comment type="function">
    <text evidence="1">Responsible for synthesis of pseudouridine from uracil-55 in the psi GC loop of transfer RNAs.</text>
</comment>
<comment type="catalytic activity">
    <reaction evidence="1">
        <text>uridine(55) in tRNA = pseudouridine(55) in tRNA</text>
        <dbReference type="Rhea" id="RHEA:42532"/>
        <dbReference type="Rhea" id="RHEA-COMP:10101"/>
        <dbReference type="Rhea" id="RHEA-COMP:10102"/>
        <dbReference type="ChEBI" id="CHEBI:65314"/>
        <dbReference type="ChEBI" id="CHEBI:65315"/>
        <dbReference type="EC" id="5.4.99.25"/>
    </reaction>
</comment>
<comment type="similarity">
    <text evidence="1">Belongs to the pseudouridine synthase TruB family. Type 1 subfamily.</text>
</comment>
<protein>
    <recommendedName>
        <fullName evidence="1">tRNA pseudouridine synthase B</fullName>
        <ecNumber evidence="1">5.4.99.25</ecNumber>
    </recommendedName>
    <alternativeName>
        <fullName evidence="1">tRNA pseudouridine(55) synthase</fullName>
        <shortName evidence="1">Psi55 synthase</shortName>
    </alternativeName>
    <alternativeName>
        <fullName evidence="1">tRNA pseudouridylate synthase</fullName>
    </alternativeName>
    <alternativeName>
        <fullName evidence="1">tRNA-uridine isomerase</fullName>
    </alternativeName>
</protein>
<organism>
    <name type="scientific">Vibrio vulnificus (strain YJ016)</name>
    <dbReference type="NCBI Taxonomy" id="196600"/>
    <lineage>
        <taxon>Bacteria</taxon>
        <taxon>Pseudomonadati</taxon>
        <taxon>Pseudomonadota</taxon>
        <taxon>Gammaproteobacteria</taxon>
        <taxon>Vibrionales</taxon>
        <taxon>Vibrionaceae</taxon>
        <taxon>Vibrio</taxon>
    </lineage>
</organism>
<feature type="chain" id="PRO_0000121942" description="tRNA pseudouridine synthase B">
    <location>
        <begin position="1"/>
        <end position="314"/>
    </location>
</feature>
<feature type="active site" description="Nucleophile" evidence="1">
    <location>
        <position position="47"/>
    </location>
</feature>
<dbReference type="EC" id="5.4.99.25" evidence="1"/>
<dbReference type="EMBL" id="BA000037">
    <property type="protein sequence ID" value="BAC95470.1"/>
    <property type="molecule type" value="Genomic_DNA"/>
</dbReference>
<dbReference type="RefSeq" id="WP_011079618.1">
    <property type="nucleotide sequence ID" value="NC_005139.1"/>
</dbReference>
<dbReference type="SMR" id="Q7MI11"/>
<dbReference type="STRING" id="672.VV93_v1c24230"/>
<dbReference type="KEGG" id="vvy:VV2706"/>
<dbReference type="PATRIC" id="fig|196600.6.peg.2702"/>
<dbReference type="eggNOG" id="COG0130">
    <property type="taxonomic scope" value="Bacteria"/>
</dbReference>
<dbReference type="HOGENOM" id="CLU_032087_0_3_6"/>
<dbReference type="Proteomes" id="UP000002675">
    <property type="component" value="Chromosome I"/>
</dbReference>
<dbReference type="GO" id="GO:0003723">
    <property type="term" value="F:RNA binding"/>
    <property type="evidence" value="ECO:0007669"/>
    <property type="project" value="InterPro"/>
</dbReference>
<dbReference type="GO" id="GO:0160148">
    <property type="term" value="F:tRNA pseudouridine(55) synthase activity"/>
    <property type="evidence" value="ECO:0007669"/>
    <property type="project" value="UniProtKB-EC"/>
</dbReference>
<dbReference type="GO" id="GO:1990481">
    <property type="term" value="P:mRNA pseudouridine synthesis"/>
    <property type="evidence" value="ECO:0007669"/>
    <property type="project" value="TreeGrafter"/>
</dbReference>
<dbReference type="GO" id="GO:0031119">
    <property type="term" value="P:tRNA pseudouridine synthesis"/>
    <property type="evidence" value="ECO:0007669"/>
    <property type="project" value="UniProtKB-UniRule"/>
</dbReference>
<dbReference type="CDD" id="cd02573">
    <property type="entry name" value="PseudoU_synth_EcTruB"/>
    <property type="match status" value="1"/>
</dbReference>
<dbReference type="CDD" id="cd21152">
    <property type="entry name" value="PUA_TruB_bacterial"/>
    <property type="match status" value="1"/>
</dbReference>
<dbReference type="FunFam" id="2.30.130.10:FF:000004">
    <property type="entry name" value="tRNA pseudouridine synthase B"/>
    <property type="match status" value="1"/>
</dbReference>
<dbReference type="FunFam" id="3.30.2350.10:FF:000003">
    <property type="entry name" value="tRNA pseudouridine synthase B"/>
    <property type="match status" value="1"/>
</dbReference>
<dbReference type="Gene3D" id="3.30.2350.10">
    <property type="entry name" value="Pseudouridine synthase"/>
    <property type="match status" value="1"/>
</dbReference>
<dbReference type="Gene3D" id="2.30.130.10">
    <property type="entry name" value="PUA domain"/>
    <property type="match status" value="1"/>
</dbReference>
<dbReference type="HAMAP" id="MF_01080">
    <property type="entry name" value="TruB_bact"/>
    <property type="match status" value="1"/>
</dbReference>
<dbReference type="InterPro" id="IPR020103">
    <property type="entry name" value="PsdUridine_synth_cat_dom_sf"/>
</dbReference>
<dbReference type="InterPro" id="IPR002501">
    <property type="entry name" value="PsdUridine_synth_N"/>
</dbReference>
<dbReference type="InterPro" id="IPR015947">
    <property type="entry name" value="PUA-like_sf"/>
</dbReference>
<dbReference type="InterPro" id="IPR036974">
    <property type="entry name" value="PUA_sf"/>
</dbReference>
<dbReference type="InterPro" id="IPR014780">
    <property type="entry name" value="tRNA_psdUridine_synth_TruB"/>
</dbReference>
<dbReference type="InterPro" id="IPR015240">
    <property type="entry name" value="tRNA_sdUridine_synth_fam1_C"/>
</dbReference>
<dbReference type="InterPro" id="IPR032819">
    <property type="entry name" value="TruB_C"/>
</dbReference>
<dbReference type="NCBIfam" id="TIGR00431">
    <property type="entry name" value="TruB"/>
    <property type="match status" value="1"/>
</dbReference>
<dbReference type="PANTHER" id="PTHR13767:SF2">
    <property type="entry name" value="PSEUDOURIDYLATE SYNTHASE TRUB1"/>
    <property type="match status" value="1"/>
</dbReference>
<dbReference type="PANTHER" id="PTHR13767">
    <property type="entry name" value="TRNA-PSEUDOURIDINE SYNTHASE"/>
    <property type="match status" value="1"/>
</dbReference>
<dbReference type="Pfam" id="PF09157">
    <property type="entry name" value="TruB-C_2"/>
    <property type="match status" value="1"/>
</dbReference>
<dbReference type="Pfam" id="PF16198">
    <property type="entry name" value="TruB_C_2"/>
    <property type="match status" value="1"/>
</dbReference>
<dbReference type="Pfam" id="PF01509">
    <property type="entry name" value="TruB_N"/>
    <property type="match status" value="1"/>
</dbReference>
<dbReference type="SUPFAM" id="SSF55120">
    <property type="entry name" value="Pseudouridine synthase"/>
    <property type="match status" value="1"/>
</dbReference>
<dbReference type="SUPFAM" id="SSF88697">
    <property type="entry name" value="PUA domain-like"/>
    <property type="match status" value="1"/>
</dbReference>
<sequence length="314" mass="35106">MARRRKGRPIDGVILLDKPTGMSSNDALQKVKRLYFAEKAGHTGALDPLATGMLPICLGEATKFSQFLLDSDKRYRVIAKLGERTDTSDSDGDVVETRPVNVTLETLEACIEKFRGESDQVPSMFSALKYQGKPLYEYARKGIEVPRESRKITVYEITLHRFEGEEVEMEVHCSKGTYIRTIVDDLGEMLGCGAHVTMLRRTGVAKYPYENMVTLEQLNELVDNANRDGVAPREVLDPLLMPMDTAVEDLPEVNLIADLADMVMHGQAVQVLGAPTEGQLRLTMGEERRFIGVGEMNRDGKIAPKRLVVFRDEE</sequence>
<evidence type="ECO:0000255" key="1">
    <source>
        <dbReference type="HAMAP-Rule" id="MF_01080"/>
    </source>
</evidence>
<name>TRUB_VIBVY</name>
<proteinExistence type="inferred from homology"/>
<gene>
    <name evidence="1" type="primary">truB</name>
    <name type="ordered locus">VV2706</name>
</gene>